<evidence type="ECO:0000250" key="1"/>
<evidence type="ECO:0000250" key="2">
    <source>
        <dbReference type="UniProtKB" id="Q96QD8"/>
    </source>
</evidence>
<evidence type="ECO:0000250" key="3">
    <source>
        <dbReference type="UniProtKB" id="Q9JHE5"/>
    </source>
</evidence>
<evidence type="ECO:0000255" key="4"/>
<evidence type="ECO:0000255" key="5">
    <source>
        <dbReference type="PROSITE-ProRule" id="PRU00114"/>
    </source>
</evidence>
<evidence type="ECO:0000305" key="6"/>
<organism>
    <name type="scientific">Xenopus tropicalis</name>
    <name type="common">Western clawed frog</name>
    <name type="synonym">Silurana tropicalis</name>
    <dbReference type="NCBI Taxonomy" id="8364"/>
    <lineage>
        <taxon>Eukaryota</taxon>
        <taxon>Metazoa</taxon>
        <taxon>Chordata</taxon>
        <taxon>Craniata</taxon>
        <taxon>Vertebrata</taxon>
        <taxon>Euteleostomi</taxon>
        <taxon>Amphibia</taxon>
        <taxon>Batrachia</taxon>
        <taxon>Anura</taxon>
        <taxon>Pipoidea</taxon>
        <taxon>Pipidae</taxon>
        <taxon>Xenopodinae</taxon>
        <taxon>Xenopus</taxon>
        <taxon>Silurana</taxon>
    </lineage>
</organism>
<comment type="function">
    <text evidence="3">Symporter that cotransports neutral amino acids and sodium ions from the extracellular to the intracellular side of the cell membrane. The transport is pH-sensitive, Li(+)-intolerant, electrogenic, driven by the Na(+) electrochemical gradient and cotransports of neutral amino acids and sodium ions with a stoichiometry of 1:1.</text>
</comment>
<comment type="catalytic activity">
    <reaction evidence="3">
        <text>L-alanine(in) + Na(+)(in) = L-alanine(out) + Na(+)(out)</text>
        <dbReference type="Rhea" id="RHEA:29283"/>
        <dbReference type="ChEBI" id="CHEBI:29101"/>
        <dbReference type="ChEBI" id="CHEBI:57972"/>
    </reaction>
    <physiologicalReaction direction="right-to-left" evidence="3">
        <dbReference type="Rhea" id="RHEA:29285"/>
    </physiologicalReaction>
</comment>
<comment type="catalytic activity">
    <reaction evidence="3">
        <text>glycine(in) + Na(+)(in) = glycine(out) + Na(+)(out)</text>
        <dbReference type="Rhea" id="RHEA:68228"/>
        <dbReference type="ChEBI" id="CHEBI:29101"/>
        <dbReference type="ChEBI" id="CHEBI:57305"/>
    </reaction>
    <physiologicalReaction direction="right-to-left" evidence="3">
        <dbReference type="Rhea" id="RHEA:68230"/>
    </physiologicalReaction>
</comment>
<comment type="catalytic activity">
    <reaction evidence="3">
        <text>L-serine(in) + Na(+)(in) = L-serine(out) + Na(+)(out)</text>
        <dbReference type="Rhea" id="RHEA:29575"/>
        <dbReference type="ChEBI" id="CHEBI:29101"/>
        <dbReference type="ChEBI" id="CHEBI:33384"/>
    </reaction>
    <physiologicalReaction direction="right-to-left" evidence="3">
        <dbReference type="Rhea" id="RHEA:29577"/>
    </physiologicalReaction>
</comment>
<comment type="catalytic activity">
    <reaction evidence="3">
        <text>L-proline(in) + Na(+)(in) = L-proline(out) + Na(+)(out)</text>
        <dbReference type="Rhea" id="RHEA:28967"/>
        <dbReference type="ChEBI" id="CHEBI:29101"/>
        <dbReference type="ChEBI" id="CHEBI:60039"/>
    </reaction>
    <physiologicalReaction direction="right-to-left" evidence="3">
        <dbReference type="Rhea" id="RHEA:28969"/>
    </physiologicalReaction>
</comment>
<comment type="catalytic activity">
    <reaction evidence="3">
        <text>L-methionine(in) + Na(+)(in) = L-methionine(out) + Na(+)(out)</text>
        <dbReference type="Rhea" id="RHEA:68240"/>
        <dbReference type="ChEBI" id="CHEBI:29101"/>
        <dbReference type="ChEBI" id="CHEBI:57844"/>
    </reaction>
    <physiologicalReaction direction="right-to-left" evidence="3">
        <dbReference type="Rhea" id="RHEA:68242"/>
    </physiologicalReaction>
</comment>
<comment type="catalytic activity">
    <reaction evidence="3">
        <text>L-histidine(in) + Na(+)(in) = L-histidine(out) + Na(+)(out)</text>
        <dbReference type="Rhea" id="RHEA:71583"/>
        <dbReference type="ChEBI" id="CHEBI:29101"/>
        <dbReference type="ChEBI" id="CHEBI:57595"/>
    </reaction>
    <physiologicalReaction direction="right-to-left" evidence="3">
        <dbReference type="Rhea" id="RHEA:71585"/>
    </physiologicalReaction>
</comment>
<comment type="catalytic activity">
    <reaction evidence="3">
        <text>L-asparagine(in) + Na(+)(in) = L-asparagine(out) + Na(+)(out)</text>
        <dbReference type="Rhea" id="RHEA:71383"/>
        <dbReference type="ChEBI" id="CHEBI:29101"/>
        <dbReference type="ChEBI" id="CHEBI:58048"/>
    </reaction>
    <physiologicalReaction direction="right-to-left" evidence="3">
        <dbReference type="Rhea" id="RHEA:71385"/>
    </physiologicalReaction>
</comment>
<comment type="catalytic activity">
    <reaction evidence="3">
        <text>L-glutamine(in) + Na(+)(in) = L-glutamine(out) + Na(+)(out)</text>
        <dbReference type="Rhea" id="RHEA:68236"/>
        <dbReference type="ChEBI" id="CHEBI:29101"/>
        <dbReference type="ChEBI" id="CHEBI:58359"/>
    </reaction>
    <physiologicalReaction direction="right-to-left" evidence="3">
        <dbReference type="Rhea" id="RHEA:68238"/>
    </physiologicalReaction>
</comment>
<comment type="catalytic activity">
    <reaction evidence="3">
        <text>L-threonine(in) + Na(+)(in) = L-threonine(out) + Na(+)(out)</text>
        <dbReference type="Rhea" id="RHEA:69999"/>
        <dbReference type="ChEBI" id="CHEBI:29101"/>
        <dbReference type="ChEBI" id="CHEBI:57926"/>
    </reaction>
    <physiologicalReaction direction="right-to-left" evidence="3">
        <dbReference type="Rhea" id="RHEA:70001"/>
    </physiologicalReaction>
</comment>
<comment type="catalytic activity">
    <reaction evidence="3">
        <text>L-leucine(in) + Na(+)(in) = L-leucine(out) + Na(+)(out)</text>
        <dbReference type="Rhea" id="RHEA:29263"/>
        <dbReference type="ChEBI" id="CHEBI:29101"/>
        <dbReference type="ChEBI" id="CHEBI:57427"/>
    </reaction>
    <physiologicalReaction direction="right-to-left" evidence="3">
        <dbReference type="Rhea" id="RHEA:29265"/>
    </physiologicalReaction>
</comment>
<comment type="catalytic activity">
    <reaction evidence="3">
        <text>L-phenylalanine(in) + Na(+)(in) = L-phenylalanine(out) + Na(+)(out)</text>
        <dbReference type="Rhea" id="RHEA:68244"/>
        <dbReference type="ChEBI" id="CHEBI:29101"/>
        <dbReference type="ChEBI" id="CHEBI:58095"/>
    </reaction>
    <physiologicalReaction direction="right-to-left" evidence="3">
        <dbReference type="Rhea" id="RHEA:68246"/>
    </physiologicalReaction>
</comment>
<comment type="activity regulation">
    <text evidence="3">Inhibited by N-methyl-D-glucamine. Inhibited by choline. Allosteric regulation of sodium ions binding by pH.</text>
</comment>
<comment type="subcellular location">
    <subcellularLocation>
        <location evidence="3">Cell membrane</location>
        <topology evidence="3">Multi-pass membrane protein</topology>
    </subcellularLocation>
</comment>
<comment type="domain">
    <text evidence="3">The extracellular C-terminal domain controls the voltage dependence for amino acid transports activity.</text>
</comment>
<comment type="similarity">
    <text evidence="6">Belongs to the amino acid/polyamine transporter 2 family.</text>
</comment>
<keyword id="KW-0029">Amino-acid transport</keyword>
<keyword id="KW-1003">Cell membrane</keyword>
<keyword id="KW-1015">Disulfide bond</keyword>
<keyword id="KW-0325">Glycoprotein</keyword>
<keyword id="KW-0406">Ion transport</keyword>
<keyword id="KW-0472">Membrane</keyword>
<keyword id="KW-1185">Reference proteome</keyword>
<keyword id="KW-0915">Sodium</keyword>
<keyword id="KW-0739">Sodium transport</keyword>
<keyword id="KW-0769">Symport</keyword>
<keyword id="KW-0812">Transmembrane</keyword>
<keyword id="KW-1133">Transmembrane helix</keyword>
<keyword id="KW-0813">Transport</keyword>
<sequence>MNNAEVLNVALDEDSSNSNDDLNYSEYQPKNHPIKSHYDMDIENVHFLLEPTMSKKKCETEYLPGTTSFGMSVFNLSNAIVGSGILGLSYAMANTGIALFMILLVFVTVFSLYSIHLLLKTANEGGSLLYEQLGLKAFGIPGKLAASGSVTLQNIGAMSSYLYIVKYELPLVIKALMDIKESNGEWYLNGDYLVIMVSLAIILPLSLLRNLGYLGYTSGFSPLCMVFFLIVVIYKKFEIPCPLEAMNMTSNSSSHDHMAHNETDDEMCKPKYFVFNSQTVYAVPILTFSFVCHPAVLPIYQELKGRSRRRMMNVSNVSFFAMFIMYLLAALFGYLTFYSKVEPELLHTYSKVFGAGVIFVVVRLAVLMAVTLTVPIVIFPIRSSLNELFCSGKDFAWIRHILITFLILAFTNVLVIFVPTIRDIFGFIGASAAAMLVFILPSAFYIRLVKKESMKSVQKIGALLFLIGGIIVMIGSMTLIILDWIHNSTSGGN</sequence>
<protein>
    <recommendedName>
        <fullName evidence="2">Sodium-coupled neutral amino acid symporter 2</fullName>
    </recommendedName>
    <alternativeName>
        <fullName>Amino acid transporter A2</fullName>
    </alternativeName>
    <alternativeName>
        <fullName>Solute carrier family 38 member 2</fullName>
    </alternativeName>
    <alternativeName>
        <fullName>System A amino acid transporter 2</fullName>
    </alternativeName>
    <alternativeName>
        <fullName>System A transporter 1</fullName>
    </alternativeName>
    <alternativeName>
        <fullName>System N amino acid transporter 2</fullName>
    </alternativeName>
</protein>
<gene>
    <name evidence="2" type="primary">slc38a2</name>
    <name type="synonym">snat2</name>
</gene>
<proteinExistence type="evidence at transcript level"/>
<name>S38A2_XENTR</name>
<dbReference type="EMBL" id="BC084182">
    <property type="protein sequence ID" value="AAH84182.1"/>
    <property type="molecule type" value="mRNA"/>
</dbReference>
<dbReference type="RefSeq" id="NP_001011056.1">
    <property type="nucleotide sequence ID" value="NM_001011056.1"/>
</dbReference>
<dbReference type="SMR" id="Q5XH90"/>
<dbReference type="FunCoup" id="Q5XH90">
    <property type="interactions" value="901"/>
</dbReference>
<dbReference type="STRING" id="8364.ENSXETP00000004839"/>
<dbReference type="GlyCosmos" id="Q5XH90">
    <property type="glycosylation" value="3 sites, No reported glycans"/>
</dbReference>
<dbReference type="PaxDb" id="8364-ENSXETP00000032118"/>
<dbReference type="DNASU" id="496466"/>
<dbReference type="GeneID" id="496466"/>
<dbReference type="KEGG" id="xtr:496466"/>
<dbReference type="AGR" id="Xenbase:XB-GENE-6258676"/>
<dbReference type="CTD" id="54407"/>
<dbReference type="Xenbase" id="XB-GENE-6258676">
    <property type="gene designation" value="slc38a2"/>
</dbReference>
<dbReference type="eggNOG" id="KOG1305">
    <property type="taxonomic scope" value="Eukaryota"/>
</dbReference>
<dbReference type="InParanoid" id="Q5XH90"/>
<dbReference type="OrthoDB" id="655540at2759"/>
<dbReference type="Proteomes" id="UP000008143">
    <property type="component" value="Chromosome 3"/>
</dbReference>
<dbReference type="GO" id="GO:0005886">
    <property type="term" value="C:plasma membrane"/>
    <property type="evidence" value="ECO:0000250"/>
    <property type="project" value="UniProtKB"/>
</dbReference>
<dbReference type="GO" id="GO:0015172">
    <property type="term" value="F:acidic amino acid transmembrane transporter activity"/>
    <property type="evidence" value="ECO:0000250"/>
    <property type="project" value="UniProtKB"/>
</dbReference>
<dbReference type="GO" id="GO:0015655">
    <property type="term" value="F:alanine:sodium symporter activity"/>
    <property type="evidence" value="ECO:0000250"/>
    <property type="project" value="UniProtKB"/>
</dbReference>
<dbReference type="GO" id="GO:0015171">
    <property type="term" value="F:amino acid transmembrane transporter activity"/>
    <property type="evidence" value="ECO:0000250"/>
    <property type="project" value="UniProtKB"/>
</dbReference>
<dbReference type="GO" id="GO:0005283">
    <property type="term" value="F:amino acid:sodium symporter activity"/>
    <property type="evidence" value="ECO:0000250"/>
    <property type="project" value="UniProtKB"/>
</dbReference>
<dbReference type="GO" id="GO:0015186">
    <property type="term" value="F:L-glutamine transmembrane transporter activity"/>
    <property type="evidence" value="ECO:0000250"/>
    <property type="project" value="UniProtKB"/>
</dbReference>
<dbReference type="GO" id="GO:0015175">
    <property type="term" value="F:neutral L-amino acid transmembrane transporter activity"/>
    <property type="evidence" value="ECO:0000250"/>
    <property type="project" value="UniProtKB"/>
</dbReference>
<dbReference type="GO" id="GO:0005295">
    <property type="term" value="F:neutral L-amino acid:sodium symporter activity"/>
    <property type="evidence" value="ECO:0000250"/>
    <property type="project" value="UniProtKB"/>
</dbReference>
<dbReference type="GO" id="GO:0005298">
    <property type="term" value="F:proline:sodium symporter activity"/>
    <property type="evidence" value="ECO:0000250"/>
    <property type="project" value="UniProtKB"/>
</dbReference>
<dbReference type="GO" id="GO:0032328">
    <property type="term" value="P:alanine transport"/>
    <property type="evidence" value="ECO:0000250"/>
    <property type="project" value="UniProtKB"/>
</dbReference>
<dbReference type="GO" id="GO:0043090">
    <property type="term" value="P:amino acid import"/>
    <property type="evidence" value="ECO:0000250"/>
    <property type="project" value="UniProtKB"/>
</dbReference>
<dbReference type="GO" id="GO:0006865">
    <property type="term" value="P:amino acid transport"/>
    <property type="evidence" value="ECO:0000250"/>
    <property type="project" value="UniProtKB"/>
</dbReference>
<dbReference type="GO" id="GO:1903803">
    <property type="term" value="P:L-glutamine import across plasma membrane"/>
    <property type="evidence" value="ECO:0000250"/>
    <property type="project" value="UniProtKB"/>
</dbReference>
<dbReference type="GO" id="GO:1904271">
    <property type="term" value="P:L-proline import across plasma membrane"/>
    <property type="evidence" value="ECO:0000250"/>
    <property type="project" value="UniProtKB"/>
</dbReference>
<dbReference type="GO" id="GO:1903812">
    <property type="term" value="P:L-serine import across plasma membrane"/>
    <property type="evidence" value="ECO:0000250"/>
    <property type="project" value="UniProtKB"/>
</dbReference>
<dbReference type="GO" id="GO:0015804">
    <property type="term" value="P:neutral amino acid transport"/>
    <property type="evidence" value="ECO:0000250"/>
    <property type="project" value="UniProtKB"/>
</dbReference>
<dbReference type="GO" id="GO:0015824">
    <property type="term" value="P:proline transport"/>
    <property type="evidence" value="ECO:0000250"/>
    <property type="project" value="UniProtKB"/>
</dbReference>
<dbReference type="GO" id="GO:1903294">
    <property type="term" value="P:regulation of glutamate secretion, neurotransmission"/>
    <property type="evidence" value="ECO:0000250"/>
    <property type="project" value="UniProtKB"/>
</dbReference>
<dbReference type="InterPro" id="IPR013057">
    <property type="entry name" value="AA_transpt_TM"/>
</dbReference>
<dbReference type="PANTHER" id="PTHR22950">
    <property type="entry name" value="AMINO ACID TRANSPORTER"/>
    <property type="match status" value="1"/>
</dbReference>
<dbReference type="PANTHER" id="PTHR22950:SF207">
    <property type="entry name" value="SODIUM-COUPLED NEUTRAL AMINO ACID SYMPORTER 2"/>
    <property type="match status" value="1"/>
</dbReference>
<dbReference type="Pfam" id="PF01490">
    <property type="entry name" value="Aa_trans"/>
    <property type="match status" value="1"/>
</dbReference>
<accession>Q5XH90</accession>
<reference key="1">
    <citation type="submission" date="2004-10" db="EMBL/GenBank/DDBJ databases">
        <authorList>
            <consortium name="NIH - Xenopus Gene Collection (XGC) project"/>
        </authorList>
    </citation>
    <scope>NUCLEOTIDE SEQUENCE [LARGE SCALE MRNA]</scope>
    <source>
        <tissue>Gastrula</tissue>
    </source>
</reference>
<feature type="chain" id="PRO_0000311375" description="Sodium-coupled neutral amino acid symporter 2">
    <location>
        <begin position="1"/>
        <end position="493"/>
    </location>
</feature>
<feature type="topological domain" description="Cytoplasmic" evidence="3 4">
    <location>
        <begin position="1"/>
        <end position="72"/>
    </location>
</feature>
<feature type="transmembrane region" description="Helical" evidence="4">
    <location>
        <begin position="73"/>
        <end position="92"/>
    </location>
</feature>
<feature type="topological domain" description="Extracellular" evidence="3 4">
    <location>
        <begin position="93"/>
        <end position="98"/>
    </location>
</feature>
<feature type="transmembrane region" description="Helical" evidence="3 4">
    <location>
        <begin position="99"/>
        <end position="119"/>
    </location>
</feature>
<feature type="topological domain" description="Cytoplasmic" evidence="3 4">
    <location>
        <begin position="120"/>
        <end position="154"/>
    </location>
</feature>
<feature type="transmembrane region" description="Helical" evidence="3 4">
    <location>
        <begin position="155"/>
        <end position="173"/>
    </location>
</feature>
<feature type="topological domain" description="Extracellular" evidence="4">
    <location>
        <begin position="174"/>
        <end position="184"/>
    </location>
</feature>
<feature type="transmembrane region" description="Helical" evidence="3 4">
    <location>
        <begin position="185"/>
        <end position="205"/>
    </location>
</feature>
<feature type="topological domain" description="Cytoplasmic" evidence="3 4">
    <location>
        <begin position="206"/>
        <end position="213"/>
    </location>
</feature>
<feature type="transmembrane region" description="Helical" evidence="3 4">
    <location>
        <begin position="214"/>
        <end position="234"/>
    </location>
</feature>
<feature type="topological domain" description="Extracellular" evidence="3 4">
    <location>
        <begin position="235"/>
        <end position="279"/>
    </location>
</feature>
<feature type="transmembrane region" description="Helical" evidence="3 4">
    <location>
        <begin position="280"/>
        <end position="300"/>
    </location>
</feature>
<feature type="topological domain" description="Cytoplasmic" evidence="3 4">
    <location>
        <begin position="301"/>
        <end position="316"/>
    </location>
</feature>
<feature type="transmembrane region" description="Helical" evidence="4">
    <location>
        <begin position="317"/>
        <end position="337"/>
    </location>
</feature>
<feature type="topological domain" description="Extracellular" evidence="3 4">
    <location>
        <begin position="338"/>
        <end position="358"/>
    </location>
</feature>
<feature type="transmembrane region" description="Helical" evidence="4">
    <location>
        <begin position="359"/>
        <end position="379"/>
    </location>
</feature>
<feature type="topological domain" description="Cytoplasmic" evidence="3 4">
    <location>
        <begin position="380"/>
        <end position="400"/>
    </location>
</feature>
<feature type="transmembrane region" description="Helical" evidence="4">
    <location>
        <begin position="401"/>
        <end position="421"/>
    </location>
</feature>
<feature type="topological domain" description="Extracellular" evidence="3 4">
    <location>
        <begin position="422"/>
        <end position="423"/>
    </location>
</feature>
<feature type="transmembrane region" description="Helical" evidence="3 4">
    <location>
        <begin position="424"/>
        <end position="444"/>
    </location>
</feature>
<feature type="topological domain" description="Cytoplasmic" evidence="3 4">
    <location>
        <begin position="445"/>
        <end position="459"/>
    </location>
</feature>
<feature type="transmembrane region" description="Helical" evidence="3 4">
    <location>
        <begin position="460"/>
        <end position="482"/>
    </location>
</feature>
<feature type="topological domain" description="Extracellular" evidence="3 4">
    <location>
        <begin position="483"/>
        <end position="493"/>
    </location>
</feature>
<feature type="region of interest" description="Regulates protein turnover upon amino acid deprivation" evidence="1">
    <location>
        <begin position="1"/>
        <end position="92"/>
    </location>
</feature>
<feature type="binding site" evidence="3">
    <location>
        <position position="78"/>
    </location>
    <ligand>
        <name>Na(+)</name>
        <dbReference type="ChEBI" id="CHEBI:29101"/>
    </ligand>
</feature>
<feature type="binding site" evidence="3">
    <location>
        <position position="373"/>
    </location>
    <ligand>
        <name>Na(+)</name>
        <dbReference type="ChEBI" id="CHEBI:29101"/>
    </ligand>
</feature>
<feature type="glycosylation site" description="N-linked (GlcNAc...) asparagine" evidence="4">
    <location>
        <position position="247"/>
    </location>
</feature>
<feature type="glycosylation site" description="N-linked (GlcNAc...) asparagine" evidence="4">
    <location>
        <position position="251"/>
    </location>
</feature>
<feature type="glycosylation site" description="N-linked (GlcNAc...) asparagine" evidence="4">
    <location>
        <position position="261"/>
    </location>
</feature>
<feature type="disulfide bond" evidence="5">
    <location>
        <begin position="241"/>
        <end position="268"/>
    </location>
</feature>